<keyword id="KW-0025">Alternative splicing</keyword>
<keyword id="KW-0150">Chloroplast</keyword>
<keyword id="KW-0472">Membrane</keyword>
<keyword id="KW-0934">Plastid</keyword>
<keyword id="KW-1185">Reference proteome</keyword>
<keyword id="KW-0762">Sugar transport</keyword>
<keyword id="KW-0812">Transmembrane</keyword>
<keyword id="KW-1133">Transmembrane helix</keyword>
<keyword id="KW-0813">Transport</keyword>
<sequence>MDSVRRTYTIMRGRHIDKRVPSKEFLSALDKAETAVRLPTGTGKDCGNPSWKRSLPHVLVASLTSLLFGYHLGVVNETLESISIDLGFSGNTIAEGLVVSTCLGGAFIGSLFSGLVADGVGRRRAFQLSALPMIVGASVSASTESLMGMLLGRFLVGIGMGIGPSVTALYVTEVSPAYVRGTYGSSTQIATCIGLLGSLFAGIPAKDNLGWWRICFWISTVPAAMLAVFMELCVESPQWLFKRGRAAEAEAVFEKLLGGSYVKAAMAELVKSDRGDDADSAKLSELLFGRSFRVVFIGSTLFALQQLSGINAVFYFSSTVFKKAGVPSASANICVGVCNLLGSTVAVVLMDKLGRKVLLIGSFAGMAVSLGLQAIAYTSLPSPFGTLFLSVGGMLLFVLSFATGAGPVPSLLLSEICPGRLRATALAVCLAVHWVINFFVGLLFLRMLEQLGSVLLNAIFGFFCVVAVIFVQKNVVETKGKSLQEIEISLLSSTQ</sequence>
<gene>
    <name type="ordered locus">At1g79820</name>
    <name type="ORF">F19K16.22</name>
    <name type="ORF">F20B17.24</name>
</gene>
<organism>
    <name type="scientific">Arabidopsis thaliana</name>
    <name type="common">Mouse-ear cress</name>
    <dbReference type="NCBI Taxonomy" id="3702"/>
    <lineage>
        <taxon>Eukaryota</taxon>
        <taxon>Viridiplantae</taxon>
        <taxon>Streptophyta</taxon>
        <taxon>Embryophyta</taxon>
        <taxon>Tracheophyta</taxon>
        <taxon>Spermatophyta</taxon>
        <taxon>Magnoliopsida</taxon>
        <taxon>eudicotyledons</taxon>
        <taxon>Gunneridae</taxon>
        <taxon>Pentapetalae</taxon>
        <taxon>rosids</taxon>
        <taxon>malvids</taxon>
        <taxon>Brassicales</taxon>
        <taxon>Brassicaceae</taxon>
        <taxon>Camelineae</taxon>
        <taxon>Arabidopsis</taxon>
    </lineage>
</organism>
<feature type="chain" id="PRO_0000259887" description="Probable plastidic glucose transporter 3">
    <location>
        <begin position="1"/>
        <end position="495"/>
    </location>
</feature>
<feature type="transmembrane region" description="Helical; Name=1" evidence="2">
    <location>
        <begin position="55"/>
        <end position="75"/>
    </location>
</feature>
<feature type="transmembrane region" description="Helical; Name=2" evidence="2">
    <location>
        <begin position="97"/>
        <end position="117"/>
    </location>
</feature>
<feature type="transmembrane region" description="Helical; Name=3" evidence="2">
    <location>
        <begin position="131"/>
        <end position="151"/>
    </location>
</feature>
<feature type="transmembrane region" description="Helical; Name=4" evidence="2">
    <location>
        <begin position="154"/>
        <end position="174"/>
    </location>
</feature>
<feature type="transmembrane region" description="Helical; Name=5" evidence="2">
    <location>
        <begin position="183"/>
        <end position="203"/>
    </location>
</feature>
<feature type="transmembrane region" description="Helical; Name=6" evidence="2">
    <location>
        <begin position="214"/>
        <end position="234"/>
    </location>
</feature>
<feature type="transmembrane region" description="Helical; Name=7" evidence="2">
    <location>
        <begin position="294"/>
        <end position="314"/>
    </location>
</feature>
<feature type="transmembrane region" description="Helical; Name=8" evidence="2">
    <location>
        <begin position="330"/>
        <end position="350"/>
    </location>
</feature>
<feature type="transmembrane region" description="Helical; Name=9" evidence="2">
    <location>
        <begin position="357"/>
        <end position="377"/>
    </location>
</feature>
<feature type="transmembrane region" description="Helical; Name=10" evidence="2">
    <location>
        <begin position="384"/>
        <end position="404"/>
    </location>
</feature>
<feature type="transmembrane region" description="Helical; Name=11" evidence="2">
    <location>
        <begin position="425"/>
        <end position="445"/>
    </location>
</feature>
<feature type="transmembrane region" description="Helical; Name=12" evidence="2">
    <location>
        <begin position="451"/>
        <end position="471"/>
    </location>
</feature>
<feature type="splice variant" id="VSP_021556" description="In isoform 2." evidence="3">
    <location>
        <begin position="1"/>
        <end position="132"/>
    </location>
</feature>
<feature type="splice variant" id="VSP_021558" description="In isoform 4." evidence="3">
    <original>VVFIGSTLFALQQLSGINAVFYFSSTVFKKAGVPSASANICVGVCNLLGSTVAVVLMDKLGRKVLLIGSFAGMAVSLGLQAIAYTSLPSPFGTLFLSVGGMLLFVLSFATGAGPVPSLLLSEICPGRLRATALAVCLAVHWVINFFVGLLFLRMLEQLGSVLLNAIFGFFCVVAVIFVQKNVVETKGKSLQEIEISLLSSTQ</original>
    <variation>VVWDKCCVLFLINCLQESWCTFSLCKHMCRSLQPLRINCCCGFDG</variation>
    <location>
        <begin position="294"/>
        <end position="495"/>
    </location>
</feature>
<feature type="splice variant" id="VSP_021557" description="In isoform 3." evidence="4">
    <location>
        <begin position="294"/>
        <end position="341"/>
    </location>
</feature>
<proteinExistence type="evidence at transcript level"/>
<comment type="function">
    <text evidence="1">May be involved in the efflux of glucose towards the cytosol.</text>
</comment>
<comment type="subcellular location">
    <subcellularLocation>
        <location evidence="1">Plastid</location>
        <location evidence="1">Chloroplast membrane</location>
        <topology evidence="1">Multi-pass membrane protein</topology>
    </subcellularLocation>
</comment>
<comment type="alternative products">
    <event type="alternative splicing"/>
    <isoform>
        <id>Q2V4B9-1</id>
        <name>1</name>
        <sequence type="displayed"/>
    </isoform>
    <isoform>
        <id>Q2V4B9-2</id>
        <name>2</name>
        <sequence type="described" ref="VSP_021556"/>
    </isoform>
    <isoform>
        <id>Q2V4B9-3</id>
        <name>3</name>
        <sequence type="described" ref="VSP_021557"/>
    </isoform>
    <isoform>
        <id>Q2V4B9-4</id>
        <name>4</name>
        <sequence type="described" ref="VSP_021558"/>
    </isoform>
</comment>
<comment type="similarity">
    <text evidence="4">Belongs to the major facilitator superfamily. Sugar transporter (TC 2.A.1.1) family.</text>
</comment>
<comment type="sequence caution" evidence="4">
    <conflict type="erroneous gene model prediction">
        <sequence resource="EMBL-CDS" id="AAF68114"/>
    </conflict>
</comment>
<comment type="sequence caution" evidence="4">
    <conflict type="erroneous gene model prediction">
        <sequence resource="EMBL-CDS" id="AAG52251"/>
    </conflict>
</comment>
<name>PLST3_ARATH</name>
<protein>
    <recommendedName>
        <fullName>Probable plastidic glucose transporter 3</fullName>
    </recommendedName>
</protein>
<accession>Q2V4B9</accession>
<accession>Q7X7U4</accession>
<accession>Q8RXX6</accession>
<accession>Q9CA87</accession>
<accession>Q9M9Z8</accession>
<reference key="1">
    <citation type="journal article" date="2000" name="Nature">
        <title>Sequence and analysis of chromosome 1 of the plant Arabidopsis thaliana.</title>
        <authorList>
            <person name="Theologis A."/>
            <person name="Ecker J.R."/>
            <person name="Palm C.J."/>
            <person name="Federspiel N.A."/>
            <person name="Kaul S."/>
            <person name="White O."/>
            <person name="Alonso J."/>
            <person name="Altafi H."/>
            <person name="Araujo R."/>
            <person name="Bowman C.L."/>
            <person name="Brooks S.Y."/>
            <person name="Buehler E."/>
            <person name="Chan A."/>
            <person name="Chao Q."/>
            <person name="Chen H."/>
            <person name="Cheuk R.F."/>
            <person name="Chin C.W."/>
            <person name="Chung M.K."/>
            <person name="Conn L."/>
            <person name="Conway A.B."/>
            <person name="Conway A.R."/>
            <person name="Creasy T.H."/>
            <person name="Dewar K."/>
            <person name="Dunn P."/>
            <person name="Etgu P."/>
            <person name="Feldblyum T.V."/>
            <person name="Feng J.-D."/>
            <person name="Fong B."/>
            <person name="Fujii C.Y."/>
            <person name="Gill J.E."/>
            <person name="Goldsmith A.D."/>
            <person name="Haas B."/>
            <person name="Hansen N.F."/>
            <person name="Hughes B."/>
            <person name="Huizar L."/>
            <person name="Hunter J.L."/>
            <person name="Jenkins J."/>
            <person name="Johnson-Hopson C."/>
            <person name="Khan S."/>
            <person name="Khaykin E."/>
            <person name="Kim C.J."/>
            <person name="Koo H.L."/>
            <person name="Kremenetskaia I."/>
            <person name="Kurtz D.B."/>
            <person name="Kwan A."/>
            <person name="Lam B."/>
            <person name="Langin-Hooper S."/>
            <person name="Lee A."/>
            <person name="Lee J.M."/>
            <person name="Lenz C.A."/>
            <person name="Li J.H."/>
            <person name="Li Y.-P."/>
            <person name="Lin X."/>
            <person name="Liu S.X."/>
            <person name="Liu Z.A."/>
            <person name="Luros J.S."/>
            <person name="Maiti R."/>
            <person name="Marziali A."/>
            <person name="Militscher J."/>
            <person name="Miranda M."/>
            <person name="Nguyen M."/>
            <person name="Nierman W.C."/>
            <person name="Osborne B.I."/>
            <person name="Pai G."/>
            <person name="Peterson J."/>
            <person name="Pham P.K."/>
            <person name="Rizzo M."/>
            <person name="Rooney T."/>
            <person name="Rowley D."/>
            <person name="Sakano H."/>
            <person name="Salzberg S.L."/>
            <person name="Schwartz J.R."/>
            <person name="Shinn P."/>
            <person name="Southwick A.M."/>
            <person name="Sun H."/>
            <person name="Tallon L.J."/>
            <person name="Tambunga G."/>
            <person name="Toriumi M.J."/>
            <person name="Town C.D."/>
            <person name="Utterback T."/>
            <person name="Van Aken S."/>
            <person name="Vaysberg M."/>
            <person name="Vysotskaia V.S."/>
            <person name="Walker M."/>
            <person name="Wu D."/>
            <person name="Yu G."/>
            <person name="Fraser C.M."/>
            <person name="Venter J.C."/>
            <person name="Davis R.W."/>
        </authorList>
    </citation>
    <scope>NUCLEOTIDE SEQUENCE [LARGE SCALE GENOMIC DNA]</scope>
    <source>
        <strain>cv. Columbia</strain>
    </source>
</reference>
<reference key="2">
    <citation type="journal article" date="2017" name="Plant J.">
        <title>Araport11: a complete reannotation of the Arabidopsis thaliana reference genome.</title>
        <authorList>
            <person name="Cheng C.Y."/>
            <person name="Krishnakumar V."/>
            <person name="Chan A.P."/>
            <person name="Thibaud-Nissen F."/>
            <person name="Schobel S."/>
            <person name="Town C.D."/>
        </authorList>
    </citation>
    <scope>GENOME REANNOTATION</scope>
    <source>
        <strain>cv. Columbia</strain>
    </source>
</reference>
<reference key="3">
    <citation type="journal article" date="2003" name="Science">
        <title>Empirical analysis of transcriptional activity in the Arabidopsis genome.</title>
        <authorList>
            <person name="Yamada K."/>
            <person name="Lim J."/>
            <person name="Dale J.M."/>
            <person name="Chen H."/>
            <person name="Shinn P."/>
            <person name="Palm C.J."/>
            <person name="Southwick A.M."/>
            <person name="Wu H.C."/>
            <person name="Kim C.J."/>
            <person name="Nguyen M."/>
            <person name="Pham P.K."/>
            <person name="Cheuk R.F."/>
            <person name="Karlin-Newmann G."/>
            <person name="Liu S.X."/>
            <person name="Lam B."/>
            <person name="Sakano H."/>
            <person name="Wu T."/>
            <person name="Yu G."/>
            <person name="Miranda M."/>
            <person name="Quach H.L."/>
            <person name="Tripp M."/>
            <person name="Chang C.H."/>
            <person name="Lee J.M."/>
            <person name="Toriumi M.J."/>
            <person name="Chan M.M."/>
            <person name="Tang C.C."/>
            <person name="Onodera C.S."/>
            <person name="Deng J.M."/>
            <person name="Akiyama K."/>
            <person name="Ansari Y."/>
            <person name="Arakawa T."/>
            <person name="Banh J."/>
            <person name="Banno F."/>
            <person name="Bowser L."/>
            <person name="Brooks S.Y."/>
            <person name="Carninci P."/>
            <person name="Chao Q."/>
            <person name="Choy N."/>
            <person name="Enju A."/>
            <person name="Goldsmith A.D."/>
            <person name="Gurjal M."/>
            <person name="Hansen N.F."/>
            <person name="Hayashizaki Y."/>
            <person name="Johnson-Hopson C."/>
            <person name="Hsuan V.W."/>
            <person name="Iida K."/>
            <person name="Karnes M."/>
            <person name="Khan S."/>
            <person name="Koesema E."/>
            <person name="Ishida J."/>
            <person name="Jiang P.X."/>
            <person name="Jones T."/>
            <person name="Kawai J."/>
            <person name="Kamiya A."/>
            <person name="Meyers C."/>
            <person name="Nakajima M."/>
            <person name="Narusaka M."/>
            <person name="Seki M."/>
            <person name="Sakurai T."/>
            <person name="Satou M."/>
            <person name="Tamse R."/>
            <person name="Vaysberg M."/>
            <person name="Wallender E.K."/>
            <person name="Wong C."/>
            <person name="Yamamura Y."/>
            <person name="Yuan S."/>
            <person name="Shinozaki K."/>
            <person name="Davis R.W."/>
            <person name="Theologis A."/>
            <person name="Ecker J.R."/>
        </authorList>
    </citation>
    <scope>NUCLEOTIDE SEQUENCE [LARGE SCALE MRNA] (ISOFORMS 2 AND 4)</scope>
    <source>
        <strain>cv. Columbia</strain>
    </source>
</reference>
<reference key="4">
    <citation type="journal article" date="2006" name="BMC Evol. Biol.">
        <title>The monosaccharide transporter gene family in land plants is ancient and shows differential subfamily expression and expansion across lineages.</title>
        <authorList>
            <person name="Johnson D.A."/>
            <person name="Hill J.P."/>
            <person name="Thomas M.A."/>
        </authorList>
    </citation>
    <scope>GENE FAMILY</scope>
</reference>
<evidence type="ECO:0000250" key="1"/>
<evidence type="ECO:0000255" key="2"/>
<evidence type="ECO:0000303" key="3">
    <source>
    </source>
</evidence>
<evidence type="ECO:0000305" key="4"/>
<dbReference type="EMBL" id="AC010793">
    <property type="protein sequence ID" value="AAF68114.1"/>
    <property type="status" value="ALT_SEQ"/>
    <property type="molecule type" value="Genomic_DNA"/>
</dbReference>
<dbReference type="EMBL" id="AC011717">
    <property type="protein sequence ID" value="AAG52251.1"/>
    <property type="status" value="ALT_SEQ"/>
    <property type="molecule type" value="Genomic_DNA"/>
</dbReference>
<dbReference type="EMBL" id="CP002684">
    <property type="protein sequence ID" value="AEE36303.1"/>
    <property type="molecule type" value="Genomic_DNA"/>
</dbReference>
<dbReference type="EMBL" id="CP002684">
    <property type="protein sequence ID" value="AEE36304.1"/>
    <property type="molecule type" value="Genomic_DNA"/>
</dbReference>
<dbReference type="EMBL" id="CP002684">
    <property type="protein sequence ID" value="AEE36305.1"/>
    <property type="molecule type" value="Genomic_DNA"/>
</dbReference>
<dbReference type="EMBL" id="AY080624">
    <property type="protein sequence ID" value="AAL85970.1"/>
    <property type="molecule type" value="mRNA"/>
</dbReference>
<dbReference type="EMBL" id="BT008550">
    <property type="protein sequence ID" value="AAP40377.1"/>
    <property type="molecule type" value="mRNA"/>
</dbReference>
<dbReference type="EMBL" id="BT008693">
    <property type="protein sequence ID" value="AAP40499.1"/>
    <property type="molecule type" value="mRNA"/>
</dbReference>
<dbReference type="PIR" id="B96829">
    <property type="entry name" value="B96829"/>
</dbReference>
<dbReference type="RefSeq" id="NP_001031303.1">
    <molecule id="Q2V4B9-3"/>
    <property type="nucleotide sequence ID" value="NM_001036226.2"/>
</dbReference>
<dbReference type="RefSeq" id="NP_178100.3">
    <molecule id="Q2V4B9-1"/>
    <property type="nucleotide sequence ID" value="NM_106631.5"/>
</dbReference>
<dbReference type="RefSeq" id="NP_850983.1">
    <molecule id="Q2V4B9-1"/>
    <property type="nucleotide sequence ID" value="NM_180652.3"/>
</dbReference>
<dbReference type="SMR" id="Q2V4B9"/>
<dbReference type="FunCoup" id="Q2V4B9">
    <property type="interactions" value="233"/>
</dbReference>
<dbReference type="STRING" id="3702.Q2V4B9"/>
<dbReference type="iPTMnet" id="Q2V4B9"/>
<dbReference type="PaxDb" id="3702-AT1G79820.2"/>
<dbReference type="EnsemblPlants" id="AT1G79820.1">
    <molecule id="Q2V4B9-1"/>
    <property type="protein sequence ID" value="AT1G79820.1"/>
    <property type="gene ID" value="AT1G79820"/>
</dbReference>
<dbReference type="EnsemblPlants" id="AT1G79820.2">
    <molecule id="Q2V4B9-1"/>
    <property type="protein sequence ID" value="AT1G79820.2"/>
    <property type="gene ID" value="AT1G79820"/>
</dbReference>
<dbReference type="EnsemblPlants" id="AT1G79820.3">
    <molecule id="Q2V4B9-3"/>
    <property type="protein sequence ID" value="AT1G79820.3"/>
    <property type="gene ID" value="AT1G79820"/>
</dbReference>
<dbReference type="GeneID" id="844321"/>
<dbReference type="Gramene" id="AT1G79820.1">
    <molecule id="Q2V4B9-1"/>
    <property type="protein sequence ID" value="AT1G79820.1"/>
    <property type="gene ID" value="AT1G79820"/>
</dbReference>
<dbReference type="Gramene" id="AT1G79820.2">
    <molecule id="Q2V4B9-1"/>
    <property type="protein sequence ID" value="AT1G79820.2"/>
    <property type="gene ID" value="AT1G79820"/>
</dbReference>
<dbReference type="Gramene" id="AT1G79820.3">
    <molecule id="Q2V4B9-3"/>
    <property type="protein sequence ID" value="AT1G79820.3"/>
    <property type="gene ID" value="AT1G79820"/>
</dbReference>
<dbReference type="KEGG" id="ath:AT1G79820"/>
<dbReference type="Araport" id="AT1G79820"/>
<dbReference type="TAIR" id="AT1G79820">
    <property type="gene designation" value="SGB1"/>
</dbReference>
<dbReference type="eggNOG" id="KOG0254">
    <property type="taxonomic scope" value="Eukaryota"/>
</dbReference>
<dbReference type="HOGENOM" id="CLU_001265_30_5_1"/>
<dbReference type="InParanoid" id="Q2V4B9"/>
<dbReference type="OMA" id="TQHFQRM"/>
<dbReference type="OrthoDB" id="6612291at2759"/>
<dbReference type="PhylomeDB" id="Q2V4B9"/>
<dbReference type="PRO" id="PR:Q2V4B9"/>
<dbReference type="Proteomes" id="UP000006548">
    <property type="component" value="Chromosome 1"/>
</dbReference>
<dbReference type="ExpressionAtlas" id="Q2V4B9">
    <property type="expression patterns" value="baseline and differential"/>
</dbReference>
<dbReference type="GO" id="GO:0031969">
    <property type="term" value="C:chloroplast membrane"/>
    <property type="evidence" value="ECO:0007669"/>
    <property type="project" value="UniProtKB-SubCell"/>
</dbReference>
<dbReference type="GO" id="GO:0005768">
    <property type="term" value="C:endosome"/>
    <property type="evidence" value="ECO:0007005"/>
    <property type="project" value="TAIR"/>
</dbReference>
<dbReference type="GO" id="GO:0005794">
    <property type="term" value="C:Golgi apparatus"/>
    <property type="evidence" value="ECO:0007005"/>
    <property type="project" value="TAIR"/>
</dbReference>
<dbReference type="GO" id="GO:0005802">
    <property type="term" value="C:trans-Golgi network"/>
    <property type="evidence" value="ECO:0007005"/>
    <property type="project" value="TAIR"/>
</dbReference>
<dbReference type="GO" id="GO:0022857">
    <property type="term" value="F:transmembrane transporter activity"/>
    <property type="evidence" value="ECO:0007669"/>
    <property type="project" value="InterPro"/>
</dbReference>
<dbReference type="CDD" id="cd17315">
    <property type="entry name" value="MFS_GLUT_like"/>
    <property type="match status" value="1"/>
</dbReference>
<dbReference type="FunFam" id="1.20.1250.20:FF:000822">
    <property type="entry name" value="Probable plastidic glucose transporter 3"/>
    <property type="match status" value="1"/>
</dbReference>
<dbReference type="Gene3D" id="1.20.1250.20">
    <property type="entry name" value="MFS general substrate transporter like domains"/>
    <property type="match status" value="1"/>
</dbReference>
<dbReference type="InterPro" id="IPR045263">
    <property type="entry name" value="GLUT"/>
</dbReference>
<dbReference type="InterPro" id="IPR020846">
    <property type="entry name" value="MFS_dom"/>
</dbReference>
<dbReference type="InterPro" id="IPR005828">
    <property type="entry name" value="MFS_sugar_transport-like"/>
</dbReference>
<dbReference type="InterPro" id="IPR036259">
    <property type="entry name" value="MFS_trans_sf"/>
</dbReference>
<dbReference type="InterPro" id="IPR003663">
    <property type="entry name" value="Sugar/inositol_transpt"/>
</dbReference>
<dbReference type="InterPro" id="IPR005829">
    <property type="entry name" value="Sugar_transporter_CS"/>
</dbReference>
<dbReference type="NCBIfam" id="TIGR00879">
    <property type="entry name" value="SP"/>
    <property type="match status" value="1"/>
</dbReference>
<dbReference type="PANTHER" id="PTHR23503:SF114">
    <property type="entry name" value="PLASTIDIC GLUCOSE TRANSPORTER 3-RELATED"/>
    <property type="match status" value="1"/>
</dbReference>
<dbReference type="PANTHER" id="PTHR23503">
    <property type="entry name" value="SOLUTE CARRIER FAMILY 2"/>
    <property type="match status" value="1"/>
</dbReference>
<dbReference type="Pfam" id="PF00083">
    <property type="entry name" value="Sugar_tr"/>
    <property type="match status" value="1"/>
</dbReference>
<dbReference type="PRINTS" id="PR00171">
    <property type="entry name" value="SUGRTRNSPORT"/>
</dbReference>
<dbReference type="SUPFAM" id="SSF103473">
    <property type="entry name" value="MFS general substrate transporter"/>
    <property type="match status" value="1"/>
</dbReference>
<dbReference type="PROSITE" id="PS50850">
    <property type="entry name" value="MFS"/>
    <property type="match status" value="1"/>
</dbReference>
<dbReference type="PROSITE" id="PS00216">
    <property type="entry name" value="SUGAR_TRANSPORT_1"/>
    <property type="match status" value="2"/>
</dbReference>
<dbReference type="PROSITE" id="PS00217">
    <property type="entry name" value="SUGAR_TRANSPORT_2"/>
    <property type="match status" value="1"/>
</dbReference>